<feature type="chain" id="PRO_1000068425" description="dITP/XTP pyrophosphatase">
    <location>
        <begin position="1"/>
        <end position="201"/>
    </location>
</feature>
<feature type="active site" description="Proton acceptor" evidence="1">
    <location>
        <position position="72"/>
    </location>
</feature>
<feature type="binding site" evidence="1">
    <location>
        <begin position="7"/>
        <end position="12"/>
    </location>
    <ligand>
        <name>substrate</name>
    </ligand>
</feature>
<feature type="binding site" evidence="1">
    <location>
        <position position="72"/>
    </location>
    <ligand>
        <name>Mg(2+)</name>
        <dbReference type="ChEBI" id="CHEBI:18420"/>
    </ligand>
</feature>
<feature type="binding site" evidence="1">
    <location>
        <position position="73"/>
    </location>
    <ligand>
        <name>substrate</name>
    </ligand>
</feature>
<feature type="binding site" evidence="1">
    <location>
        <begin position="154"/>
        <end position="157"/>
    </location>
    <ligand>
        <name>substrate</name>
    </ligand>
</feature>
<feature type="binding site" evidence="1">
    <location>
        <position position="177"/>
    </location>
    <ligand>
        <name>substrate</name>
    </ligand>
</feature>
<feature type="binding site" evidence="1">
    <location>
        <begin position="182"/>
        <end position="183"/>
    </location>
    <ligand>
        <name>substrate</name>
    </ligand>
</feature>
<gene>
    <name type="ordered locus">LEUM_0610</name>
</gene>
<dbReference type="EC" id="3.6.1.66" evidence="1"/>
<dbReference type="EMBL" id="CP000414">
    <property type="protein sequence ID" value="ABJ61724.1"/>
    <property type="molecule type" value="Genomic_DNA"/>
</dbReference>
<dbReference type="RefSeq" id="WP_011679425.1">
    <property type="nucleotide sequence ID" value="NC_008531.1"/>
</dbReference>
<dbReference type="SMR" id="Q03YJ8"/>
<dbReference type="EnsemblBacteria" id="ABJ61724">
    <property type="protein sequence ID" value="ABJ61724"/>
    <property type="gene ID" value="LEUM_0610"/>
</dbReference>
<dbReference type="GeneID" id="29576121"/>
<dbReference type="KEGG" id="lme:LEUM_0610"/>
<dbReference type="eggNOG" id="COG0127">
    <property type="taxonomic scope" value="Bacteria"/>
</dbReference>
<dbReference type="HOGENOM" id="CLU_082080_0_2_9"/>
<dbReference type="Proteomes" id="UP000000362">
    <property type="component" value="Chromosome"/>
</dbReference>
<dbReference type="GO" id="GO:0005829">
    <property type="term" value="C:cytosol"/>
    <property type="evidence" value="ECO:0007669"/>
    <property type="project" value="TreeGrafter"/>
</dbReference>
<dbReference type="GO" id="GO:0035870">
    <property type="term" value="F:dITP diphosphatase activity"/>
    <property type="evidence" value="ECO:0007669"/>
    <property type="project" value="RHEA"/>
</dbReference>
<dbReference type="GO" id="GO:0036220">
    <property type="term" value="F:ITP diphosphatase activity"/>
    <property type="evidence" value="ECO:0007669"/>
    <property type="project" value="UniProtKB-EC"/>
</dbReference>
<dbReference type="GO" id="GO:0046872">
    <property type="term" value="F:metal ion binding"/>
    <property type="evidence" value="ECO:0007669"/>
    <property type="project" value="UniProtKB-KW"/>
</dbReference>
<dbReference type="GO" id="GO:0000166">
    <property type="term" value="F:nucleotide binding"/>
    <property type="evidence" value="ECO:0007669"/>
    <property type="project" value="UniProtKB-KW"/>
</dbReference>
<dbReference type="GO" id="GO:0017111">
    <property type="term" value="F:ribonucleoside triphosphate phosphatase activity"/>
    <property type="evidence" value="ECO:0007669"/>
    <property type="project" value="InterPro"/>
</dbReference>
<dbReference type="GO" id="GO:0036222">
    <property type="term" value="F:XTP diphosphatase activity"/>
    <property type="evidence" value="ECO:0007669"/>
    <property type="project" value="RHEA"/>
</dbReference>
<dbReference type="GO" id="GO:0009117">
    <property type="term" value="P:nucleotide metabolic process"/>
    <property type="evidence" value="ECO:0007669"/>
    <property type="project" value="UniProtKB-KW"/>
</dbReference>
<dbReference type="GO" id="GO:0009146">
    <property type="term" value="P:purine nucleoside triphosphate catabolic process"/>
    <property type="evidence" value="ECO:0007669"/>
    <property type="project" value="UniProtKB-UniRule"/>
</dbReference>
<dbReference type="CDD" id="cd00515">
    <property type="entry name" value="HAM1"/>
    <property type="match status" value="1"/>
</dbReference>
<dbReference type="FunFam" id="3.90.950.10:FF:000001">
    <property type="entry name" value="dITP/XTP pyrophosphatase"/>
    <property type="match status" value="1"/>
</dbReference>
<dbReference type="Gene3D" id="3.90.950.10">
    <property type="match status" value="1"/>
</dbReference>
<dbReference type="HAMAP" id="MF_01405">
    <property type="entry name" value="Non_canon_purine_NTPase"/>
    <property type="match status" value="1"/>
</dbReference>
<dbReference type="InterPro" id="IPR020922">
    <property type="entry name" value="dITP/XTP_pyrophosphatase"/>
</dbReference>
<dbReference type="InterPro" id="IPR029001">
    <property type="entry name" value="ITPase-like_fam"/>
</dbReference>
<dbReference type="InterPro" id="IPR002637">
    <property type="entry name" value="RdgB/HAM1"/>
</dbReference>
<dbReference type="NCBIfam" id="NF011397">
    <property type="entry name" value="PRK14822.1"/>
    <property type="match status" value="1"/>
</dbReference>
<dbReference type="NCBIfam" id="TIGR00042">
    <property type="entry name" value="RdgB/HAM1 family non-canonical purine NTP pyrophosphatase"/>
    <property type="match status" value="1"/>
</dbReference>
<dbReference type="PANTHER" id="PTHR11067:SF9">
    <property type="entry name" value="INOSINE TRIPHOSPHATE PYROPHOSPHATASE"/>
    <property type="match status" value="1"/>
</dbReference>
<dbReference type="PANTHER" id="PTHR11067">
    <property type="entry name" value="INOSINE TRIPHOSPHATE PYROPHOSPHATASE/HAM1 PROTEIN"/>
    <property type="match status" value="1"/>
</dbReference>
<dbReference type="Pfam" id="PF01725">
    <property type="entry name" value="Ham1p_like"/>
    <property type="match status" value="1"/>
</dbReference>
<dbReference type="SUPFAM" id="SSF52972">
    <property type="entry name" value="ITPase-like"/>
    <property type="match status" value="1"/>
</dbReference>
<protein>
    <recommendedName>
        <fullName evidence="1">dITP/XTP pyrophosphatase</fullName>
        <ecNumber evidence="1">3.6.1.66</ecNumber>
    </recommendedName>
    <alternativeName>
        <fullName evidence="1">Non-canonical purine NTP pyrophosphatase</fullName>
    </alternativeName>
    <alternativeName>
        <fullName evidence="1">Non-standard purine NTP pyrophosphatase</fullName>
    </alternativeName>
    <alternativeName>
        <fullName evidence="1">Nucleoside-triphosphate diphosphatase</fullName>
    </alternativeName>
    <alternativeName>
        <fullName evidence="1">Nucleoside-triphosphate pyrophosphatase</fullName>
        <shortName evidence="1">NTPase</shortName>
    </alternativeName>
</protein>
<accession>Q03YJ8</accession>
<keyword id="KW-0378">Hydrolase</keyword>
<keyword id="KW-0460">Magnesium</keyword>
<keyword id="KW-0479">Metal-binding</keyword>
<keyword id="KW-0546">Nucleotide metabolism</keyword>
<keyword id="KW-0547">Nucleotide-binding</keyword>
<keyword id="KW-1185">Reference proteome</keyword>
<reference key="1">
    <citation type="journal article" date="2006" name="Proc. Natl. Acad. Sci. U.S.A.">
        <title>Comparative genomics of the lactic acid bacteria.</title>
        <authorList>
            <person name="Makarova K.S."/>
            <person name="Slesarev A."/>
            <person name="Wolf Y.I."/>
            <person name="Sorokin A."/>
            <person name="Mirkin B."/>
            <person name="Koonin E.V."/>
            <person name="Pavlov A."/>
            <person name="Pavlova N."/>
            <person name="Karamychev V."/>
            <person name="Polouchine N."/>
            <person name="Shakhova V."/>
            <person name="Grigoriev I."/>
            <person name="Lou Y."/>
            <person name="Rohksar D."/>
            <person name="Lucas S."/>
            <person name="Huang K."/>
            <person name="Goodstein D.M."/>
            <person name="Hawkins T."/>
            <person name="Plengvidhya V."/>
            <person name="Welker D."/>
            <person name="Hughes J."/>
            <person name="Goh Y."/>
            <person name="Benson A."/>
            <person name="Baldwin K."/>
            <person name="Lee J.-H."/>
            <person name="Diaz-Muniz I."/>
            <person name="Dosti B."/>
            <person name="Smeianov V."/>
            <person name="Wechter W."/>
            <person name="Barabote R."/>
            <person name="Lorca G."/>
            <person name="Altermann E."/>
            <person name="Barrangou R."/>
            <person name="Ganesan B."/>
            <person name="Xie Y."/>
            <person name="Rawsthorne H."/>
            <person name="Tamir D."/>
            <person name="Parker C."/>
            <person name="Breidt F."/>
            <person name="Broadbent J.R."/>
            <person name="Hutkins R."/>
            <person name="O'Sullivan D."/>
            <person name="Steele J."/>
            <person name="Unlu G."/>
            <person name="Saier M.H. Jr."/>
            <person name="Klaenhammer T."/>
            <person name="Richardson P."/>
            <person name="Kozyavkin S."/>
            <person name="Weimer B.C."/>
            <person name="Mills D.A."/>
        </authorList>
    </citation>
    <scope>NUCLEOTIDE SEQUENCE [LARGE SCALE GENOMIC DNA]</scope>
    <source>
        <strain>ATCC 8293 / DSM 20343 / BCRC 11652 / CCM 1803 / JCM 6124 / NCDO 523 / NBRC 100496 / NCIMB 8023 / NCTC 12954 / NRRL B-1118 / 37Y</strain>
    </source>
</reference>
<sequence>MKLIIASNNAHKITEIEALLASISIDLPVVSLQEIGDVPEIVEDGTTFEENAVKKVETIAKVAPNDYILADDSGMSVDALNGEPGVYSARYAGDHDDQANIDKVLQKLAKVPNEQRTAHFNSVIALHSPKGSNLIVNGQVDGYITESERGQDGFGYDPIFFVPSMNKTFAEMSASEKNTISHRGLALQELGKKLPVWLKGE</sequence>
<evidence type="ECO:0000255" key="1">
    <source>
        <dbReference type="HAMAP-Rule" id="MF_01405"/>
    </source>
</evidence>
<name>IXTPA_LEUMM</name>
<proteinExistence type="inferred from homology"/>
<organism>
    <name type="scientific">Leuconostoc mesenteroides subsp. mesenteroides (strain ATCC 8293 / DSM 20343 / BCRC 11652 / CCM 1803 / JCM 6124 / NCDO 523 / NBRC 100496 / NCIMB 8023 / NCTC 12954 / NRRL B-1118 / 37Y)</name>
    <dbReference type="NCBI Taxonomy" id="203120"/>
    <lineage>
        <taxon>Bacteria</taxon>
        <taxon>Bacillati</taxon>
        <taxon>Bacillota</taxon>
        <taxon>Bacilli</taxon>
        <taxon>Lactobacillales</taxon>
        <taxon>Lactobacillaceae</taxon>
        <taxon>Leuconostoc</taxon>
    </lineage>
</organism>
<comment type="function">
    <text evidence="1">Pyrophosphatase that catalyzes the hydrolysis of nucleoside triphosphates to their monophosphate derivatives, with a high preference for the non-canonical purine nucleotides XTP (xanthosine triphosphate), dITP (deoxyinosine triphosphate) and ITP. Seems to function as a house-cleaning enzyme that removes non-canonical purine nucleotides from the nucleotide pool, thus preventing their incorporation into DNA/RNA and avoiding chromosomal lesions.</text>
</comment>
<comment type="catalytic activity">
    <reaction evidence="1">
        <text>XTP + H2O = XMP + diphosphate + H(+)</text>
        <dbReference type="Rhea" id="RHEA:28610"/>
        <dbReference type="ChEBI" id="CHEBI:15377"/>
        <dbReference type="ChEBI" id="CHEBI:15378"/>
        <dbReference type="ChEBI" id="CHEBI:33019"/>
        <dbReference type="ChEBI" id="CHEBI:57464"/>
        <dbReference type="ChEBI" id="CHEBI:61314"/>
        <dbReference type="EC" id="3.6.1.66"/>
    </reaction>
</comment>
<comment type="catalytic activity">
    <reaction evidence="1">
        <text>dITP + H2O = dIMP + diphosphate + H(+)</text>
        <dbReference type="Rhea" id="RHEA:28342"/>
        <dbReference type="ChEBI" id="CHEBI:15377"/>
        <dbReference type="ChEBI" id="CHEBI:15378"/>
        <dbReference type="ChEBI" id="CHEBI:33019"/>
        <dbReference type="ChEBI" id="CHEBI:61194"/>
        <dbReference type="ChEBI" id="CHEBI:61382"/>
        <dbReference type="EC" id="3.6.1.66"/>
    </reaction>
</comment>
<comment type="catalytic activity">
    <reaction evidence="1">
        <text>ITP + H2O = IMP + diphosphate + H(+)</text>
        <dbReference type="Rhea" id="RHEA:29399"/>
        <dbReference type="ChEBI" id="CHEBI:15377"/>
        <dbReference type="ChEBI" id="CHEBI:15378"/>
        <dbReference type="ChEBI" id="CHEBI:33019"/>
        <dbReference type="ChEBI" id="CHEBI:58053"/>
        <dbReference type="ChEBI" id="CHEBI:61402"/>
        <dbReference type="EC" id="3.6.1.66"/>
    </reaction>
</comment>
<comment type="cofactor">
    <cofactor evidence="1">
        <name>Mg(2+)</name>
        <dbReference type="ChEBI" id="CHEBI:18420"/>
    </cofactor>
    <text evidence="1">Binds 1 Mg(2+) ion per subunit.</text>
</comment>
<comment type="subunit">
    <text evidence="1">Homodimer.</text>
</comment>
<comment type="similarity">
    <text evidence="1">Belongs to the HAM1 NTPase family.</text>
</comment>